<keyword id="KW-0028">Amino-acid biosynthesis</keyword>
<keyword id="KW-0057">Aromatic amino acid biosynthesis</keyword>
<keyword id="KW-0274">FAD</keyword>
<keyword id="KW-0285">Flavoprotein</keyword>
<keyword id="KW-0288">FMN</keyword>
<keyword id="KW-0456">Lyase</keyword>
<keyword id="KW-0521">NADP</keyword>
<keyword id="KW-1185">Reference proteome</keyword>
<proteinExistence type="inferred from homology"/>
<evidence type="ECO:0000255" key="1">
    <source>
        <dbReference type="HAMAP-Rule" id="MF_00300"/>
    </source>
</evidence>
<evidence type="ECO:0000256" key="2">
    <source>
        <dbReference type="SAM" id="MobiDB-lite"/>
    </source>
</evidence>
<dbReference type="EC" id="4.2.3.5" evidence="1"/>
<dbReference type="EMBL" id="AY596297">
    <property type="protein sequence ID" value="AAV45197.1"/>
    <property type="molecule type" value="Genomic_DNA"/>
</dbReference>
<dbReference type="RefSeq" id="WP_004516749.1">
    <property type="nucleotide sequence ID" value="NZ_CP039138.1"/>
</dbReference>
<dbReference type="SMR" id="Q5V5K5"/>
<dbReference type="STRING" id="272569.rrnAC0124"/>
<dbReference type="PaxDb" id="272569-rrnAC0124"/>
<dbReference type="EnsemblBacteria" id="AAV45197">
    <property type="protein sequence ID" value="AAV45197"/>
    <property type="gene ID" value="rrnAC0124"/>
</dbReference>
<dbReference type="GeneID" id="40154434"/>
<dbReference type="KEGG" id="hma:rrnAC0124"/>
<dbReference type="PATRIC" id="fig|272569.17.peg.927"/>
<dbReference type="eggNOG" id="arCOG04133">
    <property type="taxonomic scope" value="Archaea"/>
</dbReference>
<dbReference type="HOGENOM" id="CLU_034547_0_0_2"/>
<dbReference type="UniPathway" id="UPA00053">
    <property type="reaction ID" value="UER00090"/>
</dbReference>
<dbReference type="Proteomes" id="UP000001169">
    <property type="component" value="Chromosome I"/>
</dbReference>
<dbReference type="GO" id="GO:0005829">
    <property type="term" value="C:cytosol"/>
    <property type="evidence" value="ECO:0007669"/>
    <property type="project" value="TreeGrafter"/>
</dbReference>
<dbReference type="GO" id="GO:0004107">
    <property type="term" value="F:chorismate synthase activity"/>
    <property type="evidence" value="ECO:0007669"/>
    <property type="project" value="UniProtKB-UniRule"/>
</dbReference>
<dbReference type="GO" id="GO:0010181">
    <property type="term" value="F:FMN binding"/>
    <property type="evidence" value="ECO:0007669"/>
    <property type="project" value="TreeGrafter"/>
</dbReference>
<dbReference type="GO" id="GO:0008652">
    <property type="term" value="P:amino acid biosynthetic process"/>
    <property type="evidence" value="ECO:0007669"/>
    <property type="project" value="UniProtKB-KW"/>
</dbReference>
<dbReference type="GO" id="GO:0009073">
    <property type="term" value="P:aromatic amino acid family biosynthetic process"/>
    <property type="evidence" value="ECO:0007669"/>
    <property type="project" value="UniProtKB-KW"/>
</dbReference>
<dbReference type="GO" id="GO:0009423">
    <property type="term" value="P:chorismate biosynthetic process"/>
    <property type="evidence" value="ECO:0007669"/>
    <property type="project" value="UniProtKB-UniRule"/>
</dbReference>
<dbReference type="CDD" id="cd07304">
    <property type="entry name" value="Chorismate_synthase"/>
    <property type="match status" value="1"/>
</dbReference>
<dbReference type="Gene3D" id="3.60.150.10">
    <property type="entry name" value="Chorismate synthase AroC"/>
    <property type="match status" value="1"/>
</dbReference>
<dbReference type="HAMAP" id="MF_00300">
    <property type="entry name" value="Chorismate_synth"/>
    <property type="match status" value="1"/>
</dbReference>
<dbReference type="InterPro" id="IPR000453">
    <property type="entry name" value="Chorismate_synth"/>
</dbReference>
<dbReference type="InterPro" id="IPR035904">
    <property type="entry name" value="Chorismate_synth_AroC_sf"/>
</dbReference>
<dbReference type="InterPro" id="IPR020541">
    <property type="entry name" value="Chorismate_synthase_CS"/>
</dbReference>
<dbReference type="NCBIfam" id="TIGR00033">
    <property type="entry name" value="aroC"/>
    <property type="match status" value="1"/>
</dbReference>
<dbReference type="NCBIfam" id="NF003793">
    <property type="entry name" value="PRK05382.1"/>
    <property type="match status" value="1"/>
</dbReference>
<dbReference type="PANTHER" id="PTHR21085">
    <property type="entry name" value="CHORISMATE SYNTHASE"/>
    <property type="match status" value="1"/>
</dbReference>
<dbReference type="PANTHER" id="PTHR21085:SF0">
    <property type="entry name" value="CHORISMATE SYNTHASE"/>
    <property type="match status" value="1"/>
</dbReference>
<dbReference type="Pfam" id="PF01264">
    <property type="entry name" value="Chorismate_synt"/>
    <property type="match status" value="1"/>
</dbReference>
<dbReference type="PIRSF" id="PIRSF001456">
    <property type="entry name" value="Chorismate_synth"/>
    <property type="match status" value="1"/>
</dbReference>
<dbReference type="SUPFAM" id="SSF103263">
    <property type="entry name" value="Chorismate synthase, AroC"/>
    <property type="match status" value="1"/>
</dbReference>
<dbReference type="PROSITE" id="PS00787">
    <property type="entry name" value="CHORISMATE_SYNTHASE_1"/>
    <property type="match status" value="1"/>
</dbReference>
<dbReference type="PROSITE" id="PS00789">
    <property type="entry name" value="CHORISMATE_SYNTHASE_3"/>
    <property type="match status" value="1"/>
</dbReference>
<protein>
    <recommendedName>
        <fullName evidence="1">Chorismate synthase</fullName>
        <shortName evidence="1">CS</shortName>
        <ecNumber evidence="1">4.2.3.5</ecNumber>
    </recommendedName>
    <alternativeName>
        <fullName evidence="1">5-enolpyruvylshikimate-3-phosphate phospholyase</fullName>
    </alternativeName>
</protein>
<name>AROC_HALMA</name>
<accession>Q5V5K5</accession>
<feature type="chain" id="PRO_0000322431" description="Chorismate synthase">
    <location>
        <begin position="1"/>
        <end position="399"/>
    </location>
</feature>
<feature type="region of interest" description="Disordered" evidence="2">
    <location>
        <begin position="41"/>
        <end position="72"/>
    </location>
</feature>
<feature type="region of interest" description="Disordered" evidence="2">
    <location>
        <begin position="363"/>
        <end position="399"/>
    </location>
</feature>
<feature type="compositionally biased region" description="Basic and acidic residues" evidence="2">
    <location>
        <begin position="363"/>
        <end position="377"/>
    </location>
</feature>
<feature type="compositionally biased region" description="Basic and acidic residues" evidence="2">
    <location>
        <begin position="389"/>
        <end position="399"/>
    </location>
</feature>
<feature type="binding site" evidence="1">
    <location>
        <position position="48"/>
    </location>
    <ligand>
        <name>NADP(+)</name>
        <dbReference type="ChEBI" id="CHEBI:58349"/>
    </ligand>
</feature>
<feature type="binding site" evidence="1">
    <location>
        <begin position="125"/>
        <end position="127"/>
    </location>
    <ligand>
        <name>FMN</name>
        <dbReference type="ChEBI" id="CHEBI:58210"/>
    </ligand>
</feature>
<feature type="binding site" evidence="1">
    <location>
        <position position="288"/>
    </location>
    <ligand>
        <name>FMN</name>
        <dbReference type="ChEBI" id="CHEBI:58210"/>
    </ligand>
</feature>
<feature type="binding site" evidence="1">
    <location>
        <begin position="303"/>
        <end position="307"/>
    </location>
    <ligand>
        <name>FMN</name>
        <dbReference type="ChEBI" id="CHEBI:58210"/>
    </ligand>
</feature>
<feature type="binding site" evidence="1">
    <location>
        <position position="330"/>
    </location>
    <ligand>
        <name>FMN</name>
        <dbReference type="ChEBI" id="CHEBI:58210"/>
    </ligand>
</feature>
<gene>
    <name evidence="1" type="primary">aroC</name>
    <name type="ordered locus">rrnAC0124</name>
</gene>
<sequence length="399" mass="43362">MNGNEFGRLFRMTTYGESHGEAMGCTVSGVPAGVELSEEEIQKDLDRRKPGQSMITTSRGEPDKVTINSGIQDGYTTGTPIGMVIQNKDARSGKYEPFITAPRPSHGDYTYSAKFGTRNWGGGGRSSARETVNWVAAGGVAKQVLEQSDYDVQIKAHVCQIGDVEAGPVTFEDMLEHSEENEVRCADPEAAEEMRDVADQHQKEGDSIGGAIYFECRGVPSGLGAPRFDSFPSRLGQAMYSIPAVNDFEYGIGREARTTKGSEYTENWEFDEDGHPTPVGNDHGGIQGGITTGQPIYGEVSWHAPVSIPKTQETVDWETGEGKEITVTGRHDPVLPPRAVPVVEAMLACTVLDFMLLGGRINPDRLDGRPGEYDTDYHPSSPQNDPEDADTHAKTIDDD</sequence>
<reference key="1">
    <citation type="journal article" date="2004" name="Genome Res.">
        <title>Genome sequence of Haloarcula marismortui: a halophilic archaeon from the Dead Sea.</title>
        <authorList>
            <person name="Baliga N.S."/>
            <person name="Bonneau R."/>
            <person name="Facciotti M.T."/>
            <person name="Pan M."/>
            <person name="Glusman G."/>
            <person name="Deutsch E.W."/>
            <person name="Shannon P."/>
            <person name="Chiu Y."/>
            <person name="Weng R.S."/>
            <person name="Gan R.R."/>
            <person name="Hung P."/>
            <person name="Date S.V."/>
            <person name="Marcotte E."/>
            <person name="Hood L."/>
            <person name="Ng W.V."/>
        </authorList>
    </citation>
    <scope>NUCLEOTIDE SEQUENCE [LARGE SCALE GENOMIC DNA]</scope>
    <source>
        <strain>ATCC 43049 / DSM 3752 / JCM 8966 / VKM B-1809</strain>
    </source>
</reference>
<organism>
    <name type="scientific">Haloarcula marismortui (strain ATCC 43049 / DSM 3752 / JCM 8966 / VKM B-1809)</name>
    <name type="common">Halobacterium marismortui</name>
    <dbReference type="NCBI Taxonomy" id="272569"/>
    <lineage>
        <taxon>Archaea</taxon>
        <taxon>Methanobacteriati</taxon>
        <taxon>Methanobacteriota</taxon>
        <taxon>Stenosarchaea group</taxon>
        <taxon>Halobacteria</taxon>
        <taxon>Halobacteriales</taxon>
        <taxon>Haloarculaceae</taxon>
        <taxon>Haloarcula</taxon>
    </lineage>
</organism>
<comment type="function">
    <text evidence="1">Catalyzes the anti-1,4-elimination of the C-3 phosphate and the C-6 proR hydrogen from 5-enolpyruvylshikimate-3-phosphate (EPSP) to yield chorismate, which is the branch point compound that serves as the starting substrate for the three terminal pathways of aromatic amino acid biosynthesis. This reaction introduces a second double bond into the aromatic ring system.</text>
</comment>
<comment type="catalytic activity">
    <reaction evidence="1">
        <text>5-O-(1-carboxyvinyl)-3-phosphoshikimate = chorismate + phosphate</text>
        <dbReference type="Rhea" id="RHEA:21020"/>
        <dbReference type="ChEBI" id="CHEBI:29748"/>
        <dbReference type="ChEBI" id="CHEBI:43474"/>
        <dbReference type="ChEBI" id="CHEBI:57701"/>
        <dbReference type="EC" id="4.2.3.5"/>
    </reaction>
</comment>
<comment type="cofactor">
    <cofactor evidence="1">
        <name>FMNH2</name>
        <dbReference type="ChEBI" id="CHEBI:57618"/>
    </cofactor>
    <text evidence="1">Reduced FMN (FMNH(2)).</text>
</comment>
<comment type="pathway">
    <text evidence="1">Metabolic intermediate biosynthesis; chorismate biosynthesis; chorismate from D-erythrose 4-phosphate and phosphoenolpyruvate: step 7/7.</text>
</comment>
<comment type="similarity">
    <text evidence="1">Belongs to the chorismate synthase family.</text>
</comment>